<proteinExistence type="inferred from homology"/>
<feature type="chain" id="PRO_0000351540" description="3-hydroxy-5-phosphonooxypentane-2,4-dione thiolase">
    <location>
        <begin position="1"/>
        <end position="291"/>
    </location>
</feature>
<feature type="active site" description="Schiff-base intermediate with substrate" evidence="1">
    <location>
        <position position="203"/>
    </location>
</feature>
<gene>
    <name evidence="1" type="primary">lsrF</name>
    <name type="ordered locus">YPTS_0572</name>
</gene>
<sequence>MADLDDIKDGKDFGIGIPQQNPAFTLKGSGSLDWGMQSRLARIFNPKTNRTVMLAFDHGYFQGPTTGLERIDINIAPLFEYADVLMCTRGILRSVVPAAANRPVVLRASGANSILTDLSNEAVAVAMEDAVRLNACAVAAQVYIGTEHEHQSIKNIIQLIDQGMRYGMPTMAVTGVGKDMVRDQRYFSLASRIAAEMGAQVIKTYYVDSGFERIAAGCPVPIVIAGGKKLPERDALEMCYQAIDQGASGVDMGRNIFQSDAPIAMLKAVHAIVHKNENAAAAYQLFLHEQN</sequence>
<comment type="function">
    <text evidence="1">Involved in the degradation of phospho-AI-2, thereby terminating induction of the lsr operon and closing the AI-2 signaling cycle. Catalyzes the transfer of an acetyl moiety from 3-hydroxy-5-phosphonooxypentane-2,4-dione to CoA to form glycerone phosphate and acetyl-CoA.</text>
</comment>
<comment type="catalytic activity">
    <reaction evidence="1">
        <text>dihydroxyacetone phosphate + acetyl-CoA = 3-hydroxy-2,4-dioxopentyl phosphate + CoA</text>
        <dbReference type="Rhea" id="RHEA:44736"/>
        <dbReference type="ChEBI" id="CHEBI:57287"/>
        <dbReference type="ChEBI" id="CHEBI:57288"/>
        <dbReference type="ChEBI" id="CHEBI:57642"/>
        <dbReference type="ChEBI" id="CHEBI:84359"/>
        <dbReference type="EC" id="2.3.1.245"/>
    </reaction>
</comment>
<comment type="subunit">
    <text evidence="1">Homodecamer.</text>
</comment>
<comment type="subcellular location">
    <subcellularLocation>
        <location evidence="1">Cytoplasm</location>
    </subcellularLocation>
</comment>
<comment type="similarity">
    <text evidence="1">Belongs to the DeoC/FbaB aldolase family.</text>
</comment>
<accession>B2K3F7</accession>
<keyword id="KW-0963">Cytoplasm</keyword>
<keyword id="KW-0704">Schiff base</keyword>
<keyword id="KW-0808">Transferase</keyword>
<evidence type="ECO:0000255" key="1">
    <source>
        <dbReference type="HAMAP-Rule" id="MF_02052"/>
    </source>
</evidence>
<name>LSRF_YERPB</name>
<protein>
    <recommendedName>
        <fullName evidence="1">3-hydroxy-5-phosphonooxypentane-2,4-dione thiolase</fullName>
        <ecNumber evidence="1">2.3.1.245</ecNumber>
    </recommendedName>
</protein>
<reference key="1">
    <citation type="submission" date="2008-04" db="EMBL/GenBank/DDBJ databases">
        <title>Complete sequence of Yersinia pseudotuberculosis PB1/+.</title>
        <authorList>
            <person name="Copeland A."/>
            <person name="Lucas S."/>
            <person name="Lapidus A."/>
            <person name="Glavina del Rio T."/>
            <person name="Dalin E."/>
            <person name="Tice H."/>
            <person name="Bruce D."/>
            <person name="Goodwin L."/>
            <person name="Pitluck S."/>
            <person name="Munk A.C."/>
            <person name="Brettin T."/>
            <person name="Detter J.C."/>
            <person name="Han C."/>
            <person name="Tapia R."/>
            <person name="Schmutz J."/>
            <person name="Larimer F."/>
            <person name="Land M."/>
            <person name="Hauser L."/>
            <person name="Challacombe J.F."/>
            <person name="Green L."/>
            <person name="Lindler L.E."/>
            <person name="Nikolich M.P."/>
            <person name="Richardson P."/>
        </authorList>
    </citation>
    <scope>NUCLEOTIDE SEQUENCE [LARGE SCALE GENOMIC DNA]</scope>
    <source>
        <strain>PB1/+</strain>
    </source>
</reference>
<organism>
    <name type="scientific">Yersinia pseudotuberculosis serotype IB (strain PB1/+)</name>
    <dbReference type="NCBI Taxonomy" id="502801"/>
    <lineage>
        <taxon>Bacteria</taxon>
        <taxon>Pseudomonadati</taxon>
        <taxon>Pseudomonadota</taxon>
        <taxon>Gammaproteobacteria</taxon>
        <taxon>Enterobacterales</taxon>
        <taxon>Yersiniaceae</taxon>
        <taxon>Yersinia</taxon>
    </lineage>
</organism>
<dbReference type="EC" id="2.3.1.245" evidence="1"/>
<dbReference type="EMBL" id="CP001048">
    <property type="protein sequence ID" value="ACC87556.1"/>
    <property type="molecule type" value="Genomic_DNA"/>
</dbReference>
<dbReference type="RefSeq" id="WP_011191661.1">
    <property type="nucleotide sequence ID" value="NZ_CP009780.1"/>
</dbReference>
<dbReference type="SMR" id="B2K3F7"/>
<dbReference type="KEGG" id="ypb:YPTS_0572"/>
<dbReference type="PATRIC" id="fig|502801.10.peg.4248"/>
<dbReference type="GO" id="GO:0005737">
    <property type="term" value="C:cytoplasm"/>
    <property type="evidence" value="ECO:0007669"/>
    <property type="project" value="UniProtKB-SubCell"/>
</dbReference>
<dbReference type="GO" id="GO:0016747">
    <property type="term" value="F:acyltransferase activity, transferring groups other than amino-acyl groups"/>
    <property type="evidence" value="ECO:0007669"/>
    <property type="project" value="UniProtKB-UniRule"/>
</dbReference>
<dbReference type="GO" id="GO:0004332">
    <property type="term" value="F:fructose-bisphosphate aldolase activity"/>
    <property type="evidence" value="ECO:0007669"/>
    <property type="project" value="InterPro"/>
</dbReference>
<dbReference type="CDD" id="cd00958">
    <property type="entry name" value="DhnA"/>
    <property type="match status" value="1"/>
</dbReference>
<dbReference type="Gene3D" id="3.20.20.70">
    <property type="entry name" value="Aldolase class I"/>
    <property type="match status" value="1"/>
</dbReference>
<dbReference type="HAMAP" id="MF_02052">
    <property type="entry name" value="LsrF"/>
    <property type="match status" value="1"/>
</dbReference>
<dbReference type="InterPro" id="IPR013785">
    <property type="entry name" value="Aldolase_TIM"/>
</dbReference>
<dbReference type="InterPro" id="IPR002915">
    <property type="entry name" value="DeoC/FbaB/LacD_aldolase"/>
</dbReference>
<dbReference type="InterPro" id="IPR050456">
    <property type="entry name" value="DeoC/FbaB_aldolase"/>
</dbReference>
<dbReference type="InterPro" id="IPR041720">
    <property type="entry name" value="FbaB-like"/>
</dbReference>
<dbReference type="InterPro" id="IPR033673">
    <property type="entry name" value="LsrF"/>
</dbReference>
<dbReference type="NCBIfam" id="NF006081">
    <property type="entry name" value="PRK08227.1"/>
    <property type="match status" value="1"/>
</dbReference>
<dbReference type="PANTHER" id="PTHR47916:SF1">
    <property type="entry name" value="3-HYDROXY-5-PHOSPHONOOXYPENTANE-2,4-DIONE THIOLASE"/>
    <property type="match status" value="1"/>
</dbReference>
<dbReference type="PANTHER" id="PTHR47916">
    <property type="entry name" value="FRUCTOSE-BISPHOSPHATE ALDOLASE CLASS 1"/>
    <property type="match status" value="1"/>
</dbReference>
<dbReference type="Pfam" id="PF01791">
    <property type="entry name" value="DeoC"/>
    <property type="match status" value="1"/>
</dbReference>
<dbReference type="PIRSF" id="PIRSF038992">
    <property type="entry name" value="Aldolase_Ia"/>
    <property type="match status" value="1"/>
</dbReference>
<dbReference type="SMART" id="SM01133">
    <property type="entry name" value="DeoC"/>
    <property type="match status" value="1"/>
</dbReference>
<dbReference type="SUPFAM" id="SSF51569">
    <property type="entry name" value="Aldolase"/>
    <property type="match status" value="1"/>
</dbReference>